<name>MT22_MYTED</name>
<dbReference type="EMBL" id="AJ005456">
    <property type="protein sequence ID" value="CAA06553.1"/>
    <property type="molecule type" value="mRNA"/>
</dbReference>
<dbReference type="PIR" id="S39421">
    <property type="entry name" value="S39421"/>
</dbReference>
<dbReference type="GO" id="GO:0046872">
    <property type="term" value="F:metal ion binding"/>
    <property type="evidence" value="ECO:0007669"/>
    <property type="project" value="UniProtKB-KW"/>
</dbReference>
<dbReference type="InterPro" id="IPR001008">
    <property type="entry name" value="Metalthion_mollusc"/>
</dbReference>
<dbReference type="PRINTS" id="PR00875">
    <property type="entry name" value="MTMOLLUSC"/>
</dbReference>
<feature type="initiator methionine" description="Removed" evidence="2">
    <location>
        <position position="1"/>
    </location>
</feature>
<feature type="chain" id="PRO_0000197330" description="Metallothionein 20-II">
    <location>
        <begin position="2"/>
        <end position="72"/>
    </location>
</feature>
<feature type="binding site" evidence="1">
    <location>
        <position position="15"/>
    </location>
    <ligand>
        <name>Cd(2+)</name>
        <dbReference type="ChEBI" id="CHEBI:48775"/>
        <label>1</label>
    </ligand>
</feature>
<feature type="binding site" evidence="1">
    <location>
        <position position="19"/>
    </location>
    <ligand>
        <name>Cd(2+)</name>
        <dbReference type="ChEBI" id="CHEBI:48775"/>
        <label>1</label>
    </ligand>
</feature>
<feature type="binding site" evidence="1">
    <location>
        <position position="19"/>
    </location>
    <ligand>
        <name>Cd(2+)</name>
        <dbReference type="ChEBI" id="CHEBI:48775"/>
        <label>2</label>
    </ligand>
</feature>
<feature type="binding site" evidence="1">
    <location>
        <position position="24"/>
    </location>
    <ligand>
        <name>Cd(2+)</name>
        <dbReference type="ChEBI" id="CHEBI:48775"/>
        <label>2</label>
    </ligand>
</feature>
<feature type="binding site" evidence="1">
    <location>
        <position position="26"/>
    </location>
    <ligand>
        <name>Cd(2+)</name>
        <dbReference type="ChEBI" id="CHEBI:48775"/>
        <label>3</label>
    </ligand>
</feature>
<feature type="binding site" evidence="1">
    <location>
        <position position="30"/>
    </location>
    <ligand>
        <name>Cd(2+)</name>
        <dbReference type="ChEBI" id="CHEBI:48775"/>
        <label>3</label>
    </ligand>
</feature>
<feature type="binding site" evidence="1">
    <location>
        <position position="32"/>
    </location>
    <ligand>
        <name>Cd(2+)</name>
        <dbReference type="ChEBI" id="CHEBI:48775"/>
        <label>1</label>
    </ligand>
</feature>
<feature type="binding site" evidence="1">
    <location>
        <position position="32"/>
    </location>
    <ligand>
        <name>Cd(2+)</name>
        <dbReference type="ChEBI" id="CHEBI:48775"/>
        <label>3</label>
    </ligand>
</feature>
<feature type="binding site" evidence="1">
    <location>
        <position position="36"/>
    </location>
    <ligand>
        <name>Cd(2+)</name>
        <dbReference type="ChEBI" id="CHEBI:48775"/>
        <label>1</label>
    </ligand>
</feature>
<feature type="binding site" evidence="1">
    <location>
        <position position="38"/>
    </location>
    <ligand>
        <name>Cd(2+)</name>
        <dbReference type="ChEBI" id="CHEBI:48775"/>
        <label>2</label>
    </ligand>
</feature>
<feature type="binding site" evidence="1">
    <location>
        <position position="41"/>
    </location>
    <ligand>
        <name>Cd(2+)</name>
        <dbReference type="ChEBI" id="CHEBI:48775"/>
        <label>2</label>
    </ligand>
</feature>
<feature type="binding site" evidence="1">
    <location>
        <position position="41"/>
    </location>
    <ligand>
        <name>Cd(2+)</name>
        <dbReference type="ChEBI" id="CHEBI:48775"/>
        <label>3</label>
    </ligand>
</feature>
<feature type="binding site" evidence="1">
    <location>
        <position position="45"/>
    </location>
    <ligand>
        <name>Cd(2+)</name>
        <dbReference type="ChEBI" id="CHEBI:48775"/>
        <label>4</label>
    </ligand>
</feature>
<feature type="binding site" evidence="1">
    <location>
        <position position="47"/>
    </location>
    <ligand>
        <name>Cd(2+)</name>
        <dbReference type="ChEBI" id="CHEBI:48775"/>
        <label>5</label>
    </ligand>
</feature>
<feature type="binding site" evidence="1">
    <location>
        <position position="51"/>
    </location>
    <ligand>
        <name>Cd(2+)</name>
        <dbReference type="ChEBI" id="CHEBI:48775"/>
        <label>5</label>
    </ligand>
</feature>
<feature type="binding site" evidence="1">
    <location>
        <position position="53"/>
    </location>
    <ligand>
        <name>Cd(2+)</name>
        <dbReference type="ChEBI" id="CHEBI:48775"/>
        <label>5</label>
    </ligand>
</feature>
<feature type="binding site" evidence="1">
    <location>
        <position position="53"/>
    </location>
    <ligand>
        <name>Cd(2+)</name>
        <dbReference type="ChEBI" id="CHEBI:48775"/>
        <label>6</label>
    </ligand>
</feature>
<feature type="binding site" evidence="1">
    <location>
        <position position="57"/>
    </location>
    <ligand>
        <name>Cd(2+)</name>
        <dbReference type="ChEBI" id="CHEBI:48775"/>
        <label>4</label>
    </ligand>
</feature>
<feature type="binding site" evidence="1">
    <location>
        <position position="57"/>
    </location>
    <ligand>
        <name>Cd(2+)</name>
        <dbReference type="ChEBI" id="CHEBI:48775"/>
        <label>5</label>
    </ligand>
</feature>
<feature type="binding site" evidence="1">
    <location>
        <position position="63"/>
    </location>
    <ligand>
        <name>Cd(2+)</name>
        <dbReference type="ChEBI" id="CHEBI:48775"/>
        <label>4</label>
    </ligand>
</feature>
<feature type="binding site" evidence="1">
    <location>
        <position position="65"/>
    </location>
    <ligand>
        <name>Cd(2+)</name>
        <dbReference type="ChEBI" id="CHEBI:48775"/>
        <label>6</label>
    </ligand>
</feature>
<feature type="binding site" evidence="1">
    <location>
        <position position="69"/>
    </location>
    <ligand>
        <name>Cd(2+)</name>
        <dbReference type="ChEBI" id="CHEBI:48775"/>
        <label>6</label>
    </ligand>
</feature>
<feature type="binding site" evidence="1">
    <location>
        <position position="71"/>
    </location>
    <ligand>
        <name>Cd(2+)</name>
        <dbReference type="ChEBI" id="CHEBI:48775"/>
        <label>4</label>
    </ligand>
</feature>
<feature type="binding site" evidence="1">
    <location>
        <position position="71"/>
    </location>
    <ligand>
        <name>Cd(2+)</name>
        <dbReference type="ChEBI" id="CHEBI:48775"/>
        <label>6</label>
    </ligand>
</feature>
<sequence length="72" mass="7018">MPGPCNCIETNVCICGTGCSGKCCRCGDACKCASGCGCSGCKVVCKCSGTCACGCDCTGPTNCKCESGCSCK</sequence>
<proteinExistence type="evidence at protein level"/>
<organism>
    <name type="scientific">Mytilus edulis</name>
    <name type="common">Blue mussel</name>
    <dbReference type="NCBI Taxonomy" id="6550"/>
    <lineage>
        <taxon>Eukaryota</taxon>
        <taxon>Metazoa</taxon>
        <taxon>Spiralia</taxon>
        <taxon>Lophotrochozoa</taxon>
        <taxon>Mollusca</taxon>
        <taxon>Bivalvia</taxon>
        <taxon>Autobranchia</taxon>
        <taxon>Pteriomorphia</taxon>
        <taxon>Mytilida</taxon>
        <taxon>Mytiloidea</taxon>
        <taxon>Mytilidae</taxon>
        <taxon>Mytilinae</taxon>
        <taxon>Mytilus</taxon>
    </lineage>
</organism>
<evidence type="ECO:0000250" key="1">
    <source>
        <dbReference type="UniProtKB" id="P33187"/>
    </source>
</evidence>
<evidence type="ECO:0000269" key="2">
    <source>
    </source>
</evidence>
<evidence type="ECO:0000305" key="3"/>
<reference key="1">
    <citation type="journal article" date="1999" name="Comp. Biochem. Physiol.">
        <title>Cloning and characterization of metallothionein cDNAs in the mussel Mytilus edulis L. digestive gland.</title>
        <authorList>
            <person name="Barsyte D."/>
            <person name="White K.N."/>
            <person name="Lovejoy D.A."/>
        </authorList>
    </citation>
    <scope>NUCLEOTIDE SEQUENCE [MRNA]</scope>
    <source>
        <tissue>Digestive gland</tissue>
    </source>
</reference>
<reference key="2">
    <citation type="journal article" date="1993" name="Eur. J. Biochem.">
        <title>Complete amino acid sequences of five dimeric and four monomeric forms of metallothionein from the edible mussel Mytilus edulis.</title>
        <authorList>
            <person name="Mackay E.A."/>
            <person name="Overnell J."/>
            <person name="Dunbar B."/>
            <person name="Davidson I."/>
            <person name="Hunziker P.E."/>
            <person name="Kaegi J.H.R."/>
            <person name="Fothergill J.E."/>
        </authorList>
    </citation>
    <scope>PROTEIN SEQUENCE OF 2-72</scope>
</reference>
<comment type="function">
    <text>The metallothioneins are involved in the cellular sequestration of toxic metal ions.</text>
</comment>
<comment type="subunit">
    <text>Homodimer.</text>
</comment>
<comment type="induction">
    <text>By cadmium.</text>
</comment>
<comment type="similarity">
    <text evidence="3">Belongs to the metallothionein superfamily. Type 2 family.</text>
</comment>
<protein>
    <recommendedName>
        <fullName>Metallothionein 20-II</fullName>
        <shortName>MT-20-II</shortName>
    </recommendedName>
</protein>
<keyword id="KW-0104">Cadmium</keyword>
<keyword id="KW-0903">Direct protein sequencing</keyword>
<keyword id="KW-0479">Metal-binding</keyword>
<keyword id="KW-0480">Metal-thiolate cluster</keyword>
<accession>P80252</accession>